<name>PSBJ_THEVB</name>
<gene>
    <name evidence="1" type="primary">psbJ</name>
    <name type="ordered locus">tsr1544</name>
</gene>
<dbReference type="EMBL" id="BA000039">
    <property type="protein sequence ID" value="BAC09096.1"/>
    <property type="molecule type" value="Genomic_DNA"/>
</dbReference>
<dbReference type="RefSeq" id="NP_682334.1">
    <property type="nucleotide sequence ID" value="NC_004113.1"/>
</dbReference>
<dbReference type="PDB" id="1S5L">
    <property type="method" value="X-ray"/>
    <property type="resolution" value="3.50 A"/>
    <property type="chains" value="J/j=1-40"/>
</dbReference>
<dbReference type="PDB" id="2AXT">
    <property type="method" value="X-ray"/>
    <property type="resolution" value="3.00 A"/>
    <property type="chains" value="J/j=1-40"/>
</dbReference>
<dbReference type="PDB" id="3KZI">
    <property type="method" value="X-ray"/>
    <property type="resolution" value="3.60 A"/>
    <property type="chains" value="J=1-40"/>
</dbReference>
<dbReference type="PDB" id="4FBY">
    <property type="method" value="X-ray"/>
    <property type="resolution" value="6.56 A"/>
    <property type="chains" value="J/b=2-40"/>
</dbReference>
<dbReference type="PDB" id="4IXQ">
    <property type="method" value="X-ray"/>
    <property type="resolution" value="5.70 A"/>
    <property type="chains" value="J/j=1-40"/>
</dbReference>
<dbReference type="PDB" id="4IXR">
    <property type="method" value="X-ray"/>
    <property type="resolution" value="5.90 A"/>
    <property type="chains" value="J/j=1-40"/>
</dbReference>
<dbReference type="PDB" id="4PBU">
    <property type="method" value="X-ray"/>
    <property type="resolution" value="5.00 A"/>
    <property type="chains" value="J/j=1-40"/>
</dbReference>
<dbReference type="PDB" id="4PJ0">
    <property type="method" value="X-ray"/>
    <property type="resolution" value="2.44 A"/>
    <property type="chains" value="J/j=1-40"/>
</dbReference>
<dbReference type="PDB" id="4RVY">
    <property type="method" value="X-ray"/>
    <property type="resolution" value="5.50 A"/>
    <property type="chains" value="J/j=1-40"/>
</dbReference>
<dbReference type="PDB" id="4TNH">
    <property type="method" value="X-ray"/>
    <property type="resolution" value="4.90 A"/>
    <property type="chains" value="J/j=1-40"/>
</dbReference>
<dbReference type="PDB" id="4TNI">
    <property type="method" value="X-ray"/>
    <property type="resolution" value="4.60 A"/>
    <property type="chains" value="J/j=1-40"/>
</dbReference>
<dbReference type="PDB" id="4TNJ">
    <property type="method" value="X-ray"/>
    <property type="resolution" value="4.50 A"/>
    <property type="chains" value="J/j=1-40"/>
</dbReference>
<dbReference type="PDB" id="4TNK">
    <property type="method" value="X-ray"/>
    <property type="resolution" value="5.20 A"/>
    <property type="chains" value="J/j=1-40"/>
</dbReference>
<dbReference type="PDB" id="4V62">
    <property type="method" value="X-ray"/>
    <property type="resolution" value="2.90 A"/>
    <property type="chains" value="AJ/BJ=1-40"/>
</dbReference>
<dbReference type="PDB" id="4V82">
    <property type="method" value="X-ray"/>
    <property type="resolution" value="3.20 A"/>
    <property type="chains" value="AJ/BJ=1-40"/>
</dbReference>
<dbReference type="PDB" id="5E79">
    <property type="method" value="X-ray"/>
    <property type="resolution" value="3.50 A"/>
    <property type="chains" value="J/j=3-40"/>
</dbReference>
<dbReference type="PDB" id="5E7C">
    <property type="method" value="X-ray"/>
    <property type="resolution" value="4.50 A"/>
    <property type="chains" value="J/j=3-40"/>
</dbReference>
<dbReference type="PDB" id="5H2F">
    <property type="method" value="X-ray"/>
    <property type="resolution" value="2.20 A"/>
    <property type="chains" value="J/j=1-40"/>
</dbReference>
<dbReference type="PDB" id="5KAF">
    <property type="method" value="X-ray"/>
    <property type="resolution" value="3.00 A"/>
    <property type="chains" value="J/j=1-40"/>
</dbReference>
<dbReference type="PDB" id="5KAI">
    <property type="method" value="X-ray"/>
    <property type="resolution" value="2.80 A"/>
    <property type="chains" value="J/j=1-40"/>
</dbReference>
<dbReference type="PDB" id="5MX2">
    <property type="method" value="X-ray"/>
    <property type="resolution" value="2.20 A"/>
    <property type="chains" value="J/j=1-40"/>
</dbReference>
<dbReference type="PDB" id="5TIS">
    <property type="method" value="X-ray"/>
    <property type="resolution" value="2.25 A"/>
    <property type="chains" value="J/j=1-40"/>
</dbReference>
<dbReference type="PDB" id="5ZZN">
    <property type="method" value="X-ray"/>
    <property type="resolution" value="2.10 A"/>
    <property type="chains" value="J/j=1-40"/>
</dbReference>
<dbReference type="PDB" id="6DHE">
    <property type="method" value="X-ray"/>
    <property type="resolution" value="2.05 A"/>
    <property type="chains" value="J/j=5-40"/>
</dbReference>
<dbReference type="PDB" id="6DHF">
    <property type="method" value="X-ray"/>
    <property type="resolution" value="2.08 A"/>
    <property type="chains" value="J/j=5-40"/>
</dbReference>
<dbReference type="PDB" id="6DHG">
    <property type="method" value="X-ray"/>
    <property type="resolution" value="2.50 A"/>
    <property type="chains" value="J/j=5-40"/>
</dbReference>
<dbReference type="PDB" id="6DHH">
    <property type="method" value="X-ray"/>
    <property type="resolution" value="2.20 A"/>
    <property type="chains" value="J/j=5-40"/>
</dbReference>
<dbReference type="PDB" id="6DHO">
    <property type="method" value="X-ray"/>
    <property type="resolution" value="2.07 A"/>
    <property type="chains" value="J/j=5-40"/>
</dbReference>
<dbReference type="PDB" id="6DHP">
    <property type="method" value="X-ray"/>
    <property type="resolution" value="2.04 A"/>
    <property type="chains" value="J/j=5-40"/>
</dbReference>
<dbReference type="PDB" id="6W1O">
    <property type="method" value="X-ray"/>
    <property type="resolution" value="2.08 A"/>
    <property type="chains" value="J/j=1-40"/>
</dbReference>
<dbReference type="PDB" id="6W1P">
    <property type="method" value="X-ray"/>
    <property type="resolution" value="2.26 A"/>
    <property type="chains" value="J/j=1-40"/>
</dbReference>
<dbReference type="PDB" id="6W1Q">
    <property type="method" value="X-ray"/>
    <property type="resolution" value="2.27 A"/>
    <property type="chains" value="J/j=1-40"/>
</dbReference>
<dbReference type="PDB" id="6W1R">
    <property type="method" value="X-ray"/>
    <property type="resolution" value="2.23 A"/>
    <property type="chains" value="J/j=1-40"/>
</dbReference>
<dbReference type="PDB" id="6W1T">
    <property type="method" value="X-ray"/>
    <property type="resolution" value="2.01 A"/>
    <property type="chains" value="J/j=1-40"/>
</dbReference>
<dbReference type="PDB" id="6W1U">
    <property type="method" value="X-ray"/>
    <property type="resolution" value="2.09 A"/>
    <property type="chains" value="J/j=1-40"/>
</dbReference>
<dbReference type="PDB" id="6W1V">
    <property type="method" value="X-ray"/>
    <property type="resolution" value="2.09 A"/>
    <property type="chains" value="J/j=1-40"/>
</dbReference>
<dbReference type="PDB" id="7RF1">
    <property type="method" value="X-ray"/>
    <property type="resolution" value="1.89 A"/>
    <property type="chains" value="J/j=1-40"/>
</dbReference>
<dbReference type="PDB" id="7RF2">
    <property type="method" value="X-ray"/>
    <property type="resolution" value="2.08 A"/>
    <property type="chains" value="J/j=1-40"/>
</dbReference>
<dbReference type="PDB" id="7RF3">
    <property type="method" value="X-ray"/>
    <property type="resolution" value="2.26 A"/>
    <property type="chains" value="J/j=1-40"/>
</dbReference>
<dbReference type="PDB" id="7RF4">
    <property type="method" value="X-ray"/>
    <property type="resolution" value="2.27 A"/>
    <property type="chains" value="J/j=1-40"/>
</dbReference>
<dbReference type="PDB" id="7RF5">
    <property type="method" value="X-ray"/>
    <property type="resolution" value="2.23 A"/>
    <property type="chains" value="J/j=1-40"/>
</dbReference>
<dbReference type="PDB" id="7RF6">
    <property type="method" value="X-ray"/>
    <property type="resolution" value="2.01 A"/>
    <property type="chains" value="J/j=1-40"/>
</dbReference>
<dbReference type="PDB" id="7RF7">
    <property type="method" value="X-ray"/>
    <property type="resolution" value="2.09 A"/>
    <property type="chains" value="J/j=1-40"/>
</dbReference>
<dbReference type="PDB" id="7RF8">
    <property type="method" value="X-ray"/>
    <property type="resolution" value="2.09 A"/>
    <property type="chains" value="J/j=1-40"/>
</dbReference>
<dbReference type="PDB" id="7YQ2">
    <property type="method" value="X-ray"/>
    <property type="resolution" value="1.90 A"/>
    <property type="chains" value="J/j=1-40"/>
</dbReference>
<dbReference type="PDB" id="7YQ7">
    <property type="method" value="X-ray"/>
    <property type="resolution" value="1.90 A"/>
    <property type="chains" value="J/j=1-40"/>
</dbReference>
<dbReference type="PDB" id="8EZ5">
    <property type="method" value="X-ray"/>
    <property type="resolution" value="2.09 A"/>
    <property type="chains" value="J/j=1-40"/>
</dbReference>
<dbReference type="PDB" id="8F4C">
    <property type="method" value="X-ray"/>
    <property type="resolution" value="2.00 A"/>
    <property type="chains" value="J/j=1-40"/>
</dbReference>
<dbReference type="PDB" id="8F4D">
    <property type="method" value="X-ray"/>
    <property type="resolution" value="2.15 A"/>
    <property type="chains" value="J/j=1-40"/>
</dbReference>
<dbReference type="PDB" id="8F4E">
    <property type="method" value="X-ray"/>
    <property type="resolution" value="2.09 A"/>
    <property type="chains" value="J/j=1-40"/>
</dbReference>
<dbReference type="PDB" id="8F4F">
    <property type="method" value="X-ray"/>
    <property type="resolution" value="2.03 A"/>
    <property type="chains" value="J/j=1-40"/>
</dbReference>
<dbReference type="PDB" id="8F4G">
    <property type="method" value="X-ray"/>
    <property type="resolution" value="2.03 A"/>
    <property type="chains" value="J/j=1-40"/>
</dbReference>
<dbReference type="PDB" id="8F4H">
    <property type="method" value="X-ray"/>
    <property type="resolution" value="2.10 A"/>
    <property type="chains" value="J/j=1-40"/>
</dbReference>
<dbReference type="PDB" id="8F4I">
    <property type="method" value="X-ray"/>
    <property type="resolution" value="2.00 A"/>
    <property type="chains" value="J/j=1-40"/>
</dbReference>
<dbReference type="PDB" id="8F4J">
    <property type="method" value="X-ray"/>
    <property type="resolution" value="2.00 A"/>
    <property type="chains" value="J/j=1-40"/>
</dbReference>
<dbReference type="PDB" id="8F4K">
    <property type="method" value="X-ray"/>
    <property type="resolution" value="2.16 A"/>
    <property type="chains" value="J/j=1-40"/>
</dbReference>
<dbReference type="PDB" id="9EVX">
    <property type="method" value="EM"/>
    <property type="resolution" value="1.71 A"/>
    <property type="chains" value="J/j=1-40"/>
</dbReference>
<dbReference type="PDBsum" id="1S5L"/>
<dbReference type="PDBsum" id="2AXT"/>
<dbReference type="PDBsum" id="3KZI"/>
<dbReference type="PDBsum" id="4FBY"/>
<dbReference type="PDBsum" id="4IXQ"/>
<dbReference type="PDBsum" id="4IXR"/>
<dbReference type="PDBsum" id="4PBU"/>
<dbReference type="PDBsum" id="4PJ0"/>
<dbReference type="PDBsum" id="4RVY"/>
<dbReference type="PDBsum" id="4TNH"/>
<dbReference type="PDBsum" id="4TNI"/>
<dbReference type="PDBsum" id="4TNJ"/>
<dbReference type="PDBsum" id="4TNK"/>
<dbReference type="PDBsum" id="4V62"/>
<dbReference type="PDBsum" id="4V82"/>
<dbReference type="PDBsum" id="5E79"/>
<dbReference type="PDBsum" id="5E7C"/>
<dbReference type="PDBsum" id="5H2F"/>
<dbReference type="PDBsum" id="5KAF"/>
<dbReference type="PDBsum" id="5KAI"/>
<dbReference type="PDBsum" id="5MX2"/>
<dbReference type="PDBsum" id="5TIS"/>
<dbReference type="PDBsum" id="5ZZN"/>
<dbReference type="PDBsum" id="6DHE"/>
<dbReference type="PDBsum" id="6DHF"/>
<dbReference type="PDBsum" id="6DHG"/>
<dbReference type="PDBsum" id="6DHH"/>
<dbReference type="PDBsum" id="6DHO"/>
<dbReference type="PDBsum" id="6DHP"/>
<dbReference type="PDBsum" id="6W1O"/>
<dbReference type="PDBsum" id="6W1P"/>
<dbReference type="PDBsum" id="6W1Q"/>
<dbReference type="PDBsum" id="6W1R"/>
<dbReference type="PDBsum" id="6W1T"/>
<dbReference type="PDBsum" id="6W1U"/>
<dbReference type="PDBsum" id="6W1V"/>
<dbReference type="PDBsum" id="7RF1"/>
<dbReference type="PDBsum" id="7RF2"/>
<dbReference type="PDBsum" id="7RF3"/>
<dbReference type="PDBsum" id="7RF4"/>
<dbReference type="PDBsum" id="7RF5"/>
<dbReference type="PDBsum" id="7RF6"/>
<dbReference type="PDBsum" id="7RF7"/>
<dbReference type="PDBsum" id="7RF8"/>
<dbReference type="PDBsum" id="7YQ2"/>
<dbReference type="PDBsum" id="7YQ7"/>
<dbReference type="PDBsum" id="8EZ5"/>
<dbReference type="PDBsum" id="8F4C"/>
<dbReference type="PDBsum" id="8F4D"/>
<dbReference type="PDBsum" id="8F4E"/>
<dbReference type="PDBsum" id="8F4F"/>
<dbReference type="PDBsum" id="8F4G"/>
<dbReference type="PDBsum" id="8F4H"/>
<dbReference type="PDBsum" id="8F4I"/>
<dbReference type="PDBsum" id="8F4J"/>
<dbReference type="PDBsum" id="8F4K"/>
<dbReference type="PDBsum" id="9EVX"/>
<dbReference type="EMDB" id="EMD-50019"/>
<dbReference type="SMR" id="P59087"/>
<dbReference type="DIP" id="DIP-48495N"/>
<dbReference type="IntAct" id="P59087">
    <property type="interactions" value="1"/>
</dbReference>
<dbReference type="STRING" id="197221.gene:10748145"/>
<dbReference type="iPTMnet" id="P59087"/>
<dbReference type="EnsemblBacteria" id="BAC09096">
    <property type="protein sequence ID" value="BAC09096"/>
    <property type="gene ID" value="BAC09096"/>
</dbReference>
<dbReference type="KEGG" id="tel:tsr1544"/>
<dbReference type="PATRIC" id="fig|197221.4.peg.1620"/>
<dbReference type="eggNOG" id="ENOG5033ABP">
    <property type="taxonomic scope" value="Bacteria"/>
</dbReference>
<dbReference type="EvolutionaryTrace" id="P59087"/>
<dbReference type="Proteomes" id="UP000000440">
    <property type="component" value="Chromosome"/>
</dbReference>
<dbReference type="GO" id="GO:0009539">
    <property type="term" value="C:photosystem II reaction center"/>
    <property type="evidence" value="ECO:0007669"/>
    <property type="project" value="InterPro"/>
</dbReference>
<dbReference type="GO" id="GO:0031676">
    <property type="term" value="C:plasma membrane-derived thylakoid membrane"/>
    <property type="evidence" value="ECO:0007669"/>
    <property type="project" value="UniProtKB-SubCell"/>
</dbReference>
<dbReference type="GO" id="GO:0015979">
    <property type="term" value="P:photosynthesis"/>
    <property type="evidence" value="ECO:0007669"/>
    <property type="project" value="UniProtKB-UniRule"/>
</dbReference>
<dbReference type="Gene3D" id="6.10.250.2070">
    <property type="match status" value="1"/>
</dbReference>
<dbReference type="HAMAP" id="MF_01305">
    <property type="entry name" value="PSII_PsbJ"/>
    <property type="match status" value="1"/>
</dbReference>
<dbReference type="InterPro" id="IPR002682">
    <property type="entry name" value="PSII_PsbJ"/>
</dbReference>
<dbReference type="InterPro" id="IPR037267">
    <property type="entry name" value="PSII_PsbJ_sf"/>
</dbReference>
<dbReference type="NCBIfam" id="NF002722">
    <property type="entry name" value="PRK02565.1"/>
    <property type="match status" value="1"/>
</dbReference>
<dbReference type="PANTHER" id="PTHR34812">
    <property type="entry name" value="PHOTOSYSTEM II REACTION CENTER PROTEIN J"/>
    <property type="match status" value="1"/>
</dbReference>
<dbReference type="PANTHER" id="PTHR34812:SF3">
    <property type="entry name" value="PHOTOSYSTEM II REACTION CENTER PROTEIN J"/>
    <property type="match status" value="1"/>
</dbReference>
<dbReference type="Pfam" id="PF01788">
    <property type="entry name" value="PsbJ"/>
    <property type="match status" value="1"/>
</dbReference>
<dbReference type="SUPFAM" id="SSF161021">
    <property type="entry name" value="Photosystem II reaction center protein J, PsbJ"/>
    <property type="match status" value="1"/>
</dbReference>
<accession>P59087</accession>
<comment type="function">
    <text evidence="1 5 6 7 10">One of the components of the core complex of photosystem II (PSII). PSII is a light-driven water:plastoquinone oxidoreductase that uses light energy to abstract electrons from H(2)O, generating O(2) and a proton gradient subsequently used for ATP formation. It consists of a core antenna complex that captures photons, and an electron transfer chain that converts photonic excitation into a charge separation.</text>
</comment>
<comment type="function">
    <text evidence="13">May play a regulatory role in PSII biogenesis.</text>
</comment>
<comment type="cofactor">
    <text evidence="2 3 4 5 6 8 9 10 11">PSII binds multiple chlorophylls, carotenoids and specific lipids.</text>
</comment>
<comment type="subunit">
    <text evidence="1 2 3 4 5 6 7 8 9 10 11">PSII is composed of 1 copy each of membrane proteins PsbA, PsbB, PsbC, PsbD, PsbE, PsbF, PsbH, PsbI, PsbJ, PsbK, PsbL, PsbM, PsbT, PsbX, PsbY, PsbZ, Psb30/Ycf12, peripheral proteins PsbO, CyanoQ (PsbQ), PsbU, PsbV and a large number of cofactors. It forms dimeric complexes.</text>
</comment>
<comment type="subcellular location">
    <subcellularLocation>
        <location evidence="1 2 3 4 5 6 8 9 10 11">Cellular thylakoid membrane</location>
        <topology evidence="1 2 3 4 5 6 8 9 10 11">Single-pass membrane protein</topology>
    </subcellularLocation>
</comment>
<comment type="mass spectrometry" mass="4002.0" method="MALDI" evidence="7">
    <text>Suggests the protein is 1 residue shorter at the N-terminus and N-formylated.</text>
</comment>
<comment type="disruption phenotype">
    <text evidence="7 12">No change in growth rate or oxygen evolution under standard growth conditions (50 umol photons/m(2)/s and 45 degrees Celsius) (PubMed:22387395). Dimeric PSII less stable upon isolation, accumulates a PSII assembly intermediate (PSII-I) in which assembly factors Psb27, Psb28 and Psb34 associate with PSII; the complex is lacking PsbY, the CaMn(4)O(5) cluster, and O(2)-evolving complex subunits PsbO, PsbU and PsbV (PubMed:22387395, PubMed:33846594). Only the D1 protein translated from the psbA2 or psbA3 gene is found in PSII (PubMed:22387395).</text>
</comment>
<comment type="similarity">
    <text evidence="1">Belongs to the PsbJ family.</text>
</comment>
<sequence length="40" mass="4105">MMSEGGRIPLWIVATVAGMGVIVIVGLFFYGAYAGLGSSL</sequence>
<keyword id="KW-0002">3D-structure</keyword>
<keyword id="KW-0007">Acetylation</keyword>
<keyword id="KW-0472">Membrane</keyword>
<keyword id="KW-0602">Photosynthesis</keyword>
<keyword id="KW-0604">Photosystem II</keyword>
<keyword id="KW-0674">Reaction center</keyword>
<keyword id="KW-1185">Reference proteome</keyword>
<keyword id="KW-0793">Thylakoid</keyword>
<keyword id="KW-0812">Transmembrane</keyword>
<keyword id="KW-1133">Transmembrane helix</keyword>
<evidence type="ECO:0000255" key="1">
    <source>
        <dbReference type="HAMAP-Rule" id="MF_01305"/>
    </source>
</evidence>
<evidence type="ECO:0000269" key="2">
    <source>
    </source>
</evidence>
<evidence type="ECO:0000269" key="3">
    <source>
    </source>
</evidence>
<evidence type="ECO:0000269" key="4">
    <source>
    </source>
</evidence>
<evidence type="ECO:0000269" key="5">
    <source>
    </source>
</evidence>
<evidence type="ECO:0000269" key="6">
    <source>
    </source>
</evidence>
<evidence type="ECO:0000269" key="7">
    <source>
    </source>
</evidence>
<evidence type="ECO:0000269" key="8">
    <source>
    </source>
</evidence>
<evidence type="ECO:0000269" key="9">
    <source>
    </source>
</evidence>
<evidence type="ECO:0000269" key="10">
    <source>
    </source>
</evidence>
<evidence type="ECO:0000269" key="11">
    <source>
    </source>
</evidence>
<evidence type="ECO:0000269" key="12">
    <source>
    </source>
</evidence>
<evidence type="ECO:0000305" key="13">
    <source>
    </source>
</evidence>
<evidence type="ECO:0007829" key="14">
    <source>
        <dbReference type="PDB" id="5ZZN"/>
    </source>
</evidence>
<evidence type="ECO:0007829" key="15">
    <source>
        <dbReference type="PDB" id="7YQ2"/>
    </source>
</evidence>
<reference key="1">
    <citation type="journal article" date="2002" name="DNA Res.">
        <title>Complete genome structure of the thermophilic cyanobacterium Thermosynechococcus elongatus BP-1.</title>
        <authorList>
            <person name="Nakamura Y."/>
            <person name="Kaneko T."/>
            <person name="Sato S."/>
            <person name="Ikeuchi M."/>
            <person name="Katoh H."/>
            <person name="Sasamoto S."/>
            <person name="Watanabe A."/>
            <person name="Iriguchi M."/>
            <person name="Kawashima K."/>
            <person name="Kimura T."/>
            <person name="Kishida Y."/>
            <person name="Kiyokawa C."/>
            <person name="Kohara M."/>
            <person name="Matsumoto M."/>
            <person name="Matsuno A."/>
            <person name="Nakazaki N."/>
            <person name="Shimpo S."/>
            <person name="Sugimoto M."/>
            <person name="Takeuchi C."/>
            <person name="Yamada M."/>
            <person name="Tabata S."/>
        </authorList>
    </citation>
    <scope>NUCLEOTIDE SEQUENCE [LARGE SCALE GENOMIC DNA]</scope>
    <source>
        <strain>NIES-2133 / IAM M-273 / BP-1</strain>
    </source>
</reference>
<reference key="2">
    <citation type="journal article" date="2012" name="Biochim. Biophys. Acta">
        <title>Deletion of psbJ leads to accumulation of Psb27-Psb28 photosystem II complexes in Thermosynechococcus elongatus.</title>
        <authorList>
            <person name="Nowaczyk M.M."/>
            <person name="Krause K."/>
            <person name="Mieseler M."/>
            <person name="Sczibilanski A."/>
            <person name="Ikeuchi M."/>
            <person name="Roegner M."/>
        </authorList>
    </citation>
    <scope>FUNCTION</scope>
    <scope>SUBUNIT</scope>
    <scope>MASS SPECTROMETRY</scope>
    <scope>DISRUPTION PHENOTYPE</scope>
    <source>
        <strain>NIES-2133 / IAM M-273 / BP-1</strain>
    </source>
</reference>
<reference key="3">
    <citation type="journal article" date="2021" name="Nat. Plants">
        <title>Structural insights into photosystem II assembly.</title>
        <authorList>
            <person name="Zabret J."/>
            <person name="Bohn S."/>
            <person name="Schuller S.K."/>
            <person name="Arnolds O."/>
            <person name="Moller M."/>
            <person name="Meier-Credo J."/>
            <person name="Liauw P."/>
            <person name="Chan A."/>
            <person name="Tajkhorshid E."/>
            <person name="Langer J.D."/>
            <person name="Stoll R."/>
            <person name="Krieger-Liszkay A."/>
            <person name="Engel B.D."/>
            <person name="Rudack T."/>
            <person name="Schuller J.M."/>
            <person name="Nowaczyk M.M."/>
        </authorList>
    </citation>
    <scope>FUNCTION</scope>
    <scope>DISRUPTION PHENOTYPE</scope>
    <source>
        <strain>NIES-2133 / IAM M-273 / BP-1</strain>
    </source>
</reference>
<reference key="4">
    <citation type="journal article" date="2004" name="Science">
        <title>Architecture of the photosynthetic oxygen-evolving center.</title>
        <authorList>
            <person name="Ferreira K.N."/>
            <person name="Iverson T.M."/>
            <person name="Maghlaoui K."/>
            <person name="Barber J."/>
            <person name="Iwata S."/>
        </authorList>
    </citation>
    <scope>X-RAY CRYSTALLOGRAPHY (3.50 ANGSTROMS) IN PHOTOSYSTEM II</scope>
    <scope>COFACTOR</scope>
    <scope>SUBUNIT</scope>
    <scope>SUBCELLULAR LOCATION</scope>
</reference>
<reference key="5">
    <citation type="journal article" date="2005" name="Nature">
        <title>Towards complete cofactor arrangement in the 3.0 A resolution structure of photosystem II.</title>
        <authorList>
            <person name="Loll B."/>
            <person name="Kern J."/>
            <person name="Saenger W."/>
            <person name="Zouni A."/>
            <person name="Biesiadka J."/>
        </authorList>
    </citation>
    <scope>X-RAY CRYSTALLOGRAPHY (3.00 ANGSTROMS) IN PHOTOSYSTEM II</scope>
    <scope>COFACTOR</scope>
    <scope>SUBUNIT</scope>
    <scope>SUBCELLULAR LOCATION</scope>
    <source>
        <strain>NIES-2133 / IAM M-273 / BP-1</strain>
    </source>
</reference>
<reference key="6">
    <citation type="journal article" date="2009" name="Nat. Struct. Mol. Biol.">
        <title>Cyanobacterial photosystem II at 2.9-A resolution and the role of quinones, lipids, channels and chloride.</title>
        <authorList>
            <person name="Guskov A."/>
            <person name="Kern J."/>
            <person name="Gabdulkhakov A."/>
            <person name="Broser M."/>
            <person name="Zouni A."/>
            <person name="Saenger W."/>
        </authorList>
    </citation>
    <scope>X-RAY CRYSTALLOGRAPHY (2.90 ANGSTROMS) IN PHOTOSYSTEM II</scope>
    <scope>COFACTOR</scope>
    <scope>SUBUNIT</scope>
    <scope>SUBCELLULAR LOCATION</scope>
    <scope>ACETYLATION AT MET-2</scope>
    <scope>MASS SPECTROMETRY</scope>
    <scope>TOPOLOGY</scope>
    <source>
        <strain>NIES-2133 / IAM M-273 / BP-1</strain>
    </source>
</reference>
<reference key="7">
    <citation type="journal article" date="2010" name="J. Biol. Chem.">
        <title>Crystal structure of monomeric photosystem II from Thermosynechococcus elongatus at 3.6 A resolution.</title>
        <authorList>
            <person name="Broser M."/>
            <person name="Gabdulkhakov A."/>
            <person name="Kern J."/>
            <person name="Guskov A."/>
            <person name="Muh F."/>
            <person name="Saenger W."/>
            <person name="Zouni A."/>
        </authorList>
    </citation>
    <scope>X-RAY CRYSTALLOGRAPHY (3.60 ANGSTROMS) IN PHOTOSYSTEM II</scope>
    <scope>FUNCTION</scope>
    <scope>COFACTOR</scope>
    <scope>SUBUNIT</scope>
    <scope>SUBCELLULAR LOCATION</scope>
    <scope>ACETYLATION AT MET-2</scope>
    <scope>MASS SPECTROMETRY</scope>
    <source>
        <strain>NIES-2133 / IAM M-273 / BP-1</strain>
    </source>
</reference>
<reference key="8">
    <citation type="journal article" date="2011" name="J. Biol. Chem.">
        <title>Structural basis of cyanobacterial photosystem II inhibition by the herbicide terbutryn.</title>
        <authorList>
            <person name="Broser M."/>
            <person name="Glockner C."/>
            <person name="Gabdulkhakov A."/>
            <person name="Guskov A."/>
            <person name="Buchta J."/>
            <person name="Kern J."/>
            <person name="Muh F."/>
            <person name="Dau H."/>
            <person name="Saenger W."/>
            <person name="Zouni A."/>
        </authorList>
    </citation>
    <scope>X-RAY CRYSTALLOGRAPHY (3.20 ANGSTROMS) IN PHOTOSYSTEM II</scope>
    <scope>FUNCTION</scope>
    <scope>COFACTOR</scope>
    <scope>SUBUNIT</scope>
    <scope>SUBCELLULAR LOCATION</scope>
</reference>
<reference key="9">
    <citation type="journal article" date="2012" name="Proc. Natl. Acad. Sci. U.S.A.">
        <title>Room temperature femtosecond X-ray diffraction of photosystem II microcrystals.</title>
        <authorList>
            <person name="Kern J."/>
            <person name="Alonso-Mori R."/>
            <person name="Hellmich J."/>
            <person name="Tran R."/>
            <person name="Hattne J."/>
            <person name="Laksmono H."/>
            <person name="Glockner C."/>
            <person name="Echols N."/>
            <person name="Sierra R.G."/>
            <person name="Sellberg J."/>
            <person name="Lassalle-Kaiser B."/>
            <person name="Gildea R.J."/>
            <person name="Glatzel P."/>
            <person name="Grosse-Kunstleve R.W."/>
            <person name="Latimer M.J."/>
            <person name="McQueen T.A."/>
            <person name="DiFiore D."/>
            <person name="Fry A.R."/>
            <person name="Messerschmidt M."/>
            <person name="Miahnahri A."/>
            <person name="Schafer D.W."/>
            <person name="Seibert M.M."/>
            <person name="Sokaras D."/>
            <person name="Weng T.C."/>
            <person name="Zwart P.H."/>
            <person name="White W.E."/>
            <person name="Adams P.D."/>
            <person name="Bogan M.J."/>
            <person name="Boutet S."/>
            <person name="Williams G.J."/>
            <person name="Messinger J."/>
            <person name="Sauter N.K."/>
            <person name="Zouni A."/>
            <person name="Bergmann U."/>
            <person name="Yano J."/>
            <person name="Yachandra V.K."/>
        </authorList>
    </citation>
    <scope>X-RAY CRYSTALLOGRAPHY (6.56 ANGSTROMS) OF 2-40 IN PHOTOSYSTEM II</scope>
    <scope>COFACTOR</scope>
    <scope>SUBUNIT</scope>
    <scope>SUBCELLULAR LOCATION</scope>
    <source>
        <strain>NIES-2133 / IAM M-273 / BP-1</strain>
    </source>
</reference>
<reference key="10">
    <citation type="journal article" date="2013" name="Science">
        <title>Simultaneous femtosecond X-ray spectroscopy and diffraction of photosystem II at room temperature.</title>
        <authorList>
            <person name="Kern J."/>
            <person name="Alonso-Mori R."/>
            <person name="Tran R."/>
            <person name="Hattne J."/>
            <person name="Gildea R.J."/>
            <person name="Echols N."/>
            <person name="Glockner C."/>
            <person name="Hellmich J."/>
            <person name="Laksmono H."/>
            <person name="Sierra R.G."/>
            <person name="Lassalle-Kaiser B."/>
            <person name="Koroidov S."/>
            <person name="Lampe A."/>
            <person name="Han G."/>
            <person name="Gul S."/>
            <person name="Difiore D."/>
            <person name="Milathianaki D."/>
            <person name="Fry A.R."/>
            <person name="Miahnahri A."/>
            <person name="Schafer D.W."/>
            <person name="Messerschmidt M."/>
            <person name="Seibert M.M."/>
            <person name="Koglin J.E."/>
            <person name="Sokaras D."/>
            <person name="Weng T.C."/>
            <person name="Sellberg J."/>
            <person name="Latimer M.J."/>
            <person name="Grosse-Kunstleve R.W."/>
            <person name="Zwart P.H."/>
            <person name="White W.E."/>
            <person name="Glatzel P."/>
            <person name="Adams P.D."/>
            <person name="Bogan M.J."/>
            <person name="Williams G.J."/>
            <person name="Boutet S."/>
            <person name="Messinger J."/>
            <person name="Zouni A."/>
            <person name="Sauter N.K."/>
            <person name="Yachandra V.K."/>
            <person name="Bergmann U."/>
            <person name="Yano J."/>
        </authorList>
    </citation>
    <scope>X-RAY CRYSTALLOGRAPHY (5.70 ANGSTROMS) IN PHOTOSYSTEM II</scope>
    <scope>COFACTOR</scope>
    <scope>SUBUNIT</scope>
    <scope>SUBCELLULAR LOCATION</scope>
    <source>
        <strain>NIES-2133 / IAM M-273 / BP-1</strain>
    </source>
</reference>
<reference key="11">
    <citation type="journal article" date="2014" name="Nature">
        <title>Serial time-resolved crystallography of photosystem II using a femtosecond X-ray laser.</title>
        <authorList>
            <person name="Kupitz C."/>
            <person name="Basu S."/>
            <person name="Grotjohann I."/>
            <person name="Fromme R."/>
            <person name="Zatsepin N.A."/>
            <person name="Rendek K.N."/>
            <person name="Hunter M.S."/>
            <person name="Shoeman R.L."/>
            <person name="White T.A."/>
            <person name="Wang D."/>
            <person name="James D."/>
            <person name="Yang J.H."/>
            <person name="Cobb D.E."/>
            <person name="Reeder B."/>
            <person name="Sierra R.G."/>
            <person name="Liu H."/>
            <person name="Barty A."/>
            <person name="Aquila A.L."/>
            <person name="Deponte D."/>
            <person name="Kirian R.A."/>
            <person name="Bari S."/>
            <person name="Bergkamp J.J."/>
            <person name="Beyerlein K.R."/>
            <person name="Bogan M.J."/>
            <person name="Caleman C."/>
            <person name="Chao T.C."/>
            <person name="Conrad C.E."/>
            <person name="Davis K.M."/>
            <person name="Fleckenstein H."/>
            <person name="Galli L."/>
            <person name="Hau-Riege S.P."/>
            <person name="Kassemeyer S."/>
            <person name="Laksmono H."/>
            <person name="Liang M."/>
            <person name="Lomb L."/>
            <person name="Marchesini S."/>
            <person name="Martin A.V."/>
            <person name="Messerschmidt M."/>
            <person name="Milathianaki D."/>
            <person name="Nass K."/>
            <person name="Ros A."/>
            <person name="Roy-Chowdhury S."/>
            <person name="Schmidt K."/>
            <person name="Seibert M."/>
            <person name="Steinbrener J."/>
            <person name="Stellato F."/>
            <person name="Yan L."/>
            <person name="Yoon C."/>
            <person name="Moore T.A."/>
            <person name="Moore A.L."/>
            <person name="Pushkar Y."/>
            <person name="Williams G.J."/>
            <person name="Boutet S."/>
            <person name="Doak R.B."/>
            <person name="Weierstall U."/>
            <person name="Frank M."/>
            <person name="Chapman H.N."/>
            <person name="Spence J.C."/>
            <person name="Fromme P."/>
        </authorList>
    </citation>
    <scope>X-RAY CRYSTALLOGRAPHY (5.00 ANGSTROMS) IN PHOTOSYSTEM II</scope>
    <scope>COFACTOR</scope>
    <scope>SUBUNIT</scope>
    <scope>SUBCELLULAR LOCATION</scope>
    <source>
        <strain>NIES-2133 / IAM M-273 / BP-1</strain>
    </source>
</reference>
<reference key="12">
    <citation type="journal article" date="2014" name="Nat. Commun.">
        <title>Taking snapshots of photosynthetic water oxidation using femtosecond X-ray diffraction and spectroscopy.</title>
        <authorList>
            <person name="Kern J."/>
            <person name="Tran R."/>
            <person name="Alonso-Mori R."/>
            <person name="Koroidov S."/>
            <person name="Echols N."/>
            <person name="Hattne J."/>
            <person name="Ibrahim M."/>
            <person name="Gul S."/>
            <person name="Laksmono H."/>
            <person name="Sierra R.G."/>
            <person name="Gildea R.J."/>
            <person name="Han G."/>
            <person name="Hellmich J."/>
            <person name="Lassalle-Kaiser B."/>
            <person name="Chatterjee R."/>
            <person name="Brewster A.S."/>
            <person name="Stan C.A."/>
            <person name="Gloeckner C."/>
            <person name="Lampe A."/>
            <person name="DiFiore D."/>
            <person name="Milathianaki D."/>
            <person name="Fry A.R."/>
            <person name="Seibert M.M."/>
            <person name="Koglin J.E."/>
            <person name="Gallo E."/>
            <person name="Uhlig J."/>
            <person name="Sokaras D."/>
            <person name="Weng T.C."/>
            <person name="Zwart P.H."/>
            <person name="Skinner D.E."/>
            <person name="Bogan M.J."/>
            <person name="Messerschmidt M."/>
            <person name="Glatzel P."/>
            <person name="Williams G.J."/>
            <person name="Boutet S."/>
            <person name="Adams P.D."/>
            <person name="Zouni A."/>
            <person name="Messinger J."/>
            <person name="Sauter N.K."/>
            <person name="Bergmann U."/>
            <person name="Yano J."/>
            <person name="Yachandra V.K."/>
        </authorList>
    </citation>
    <scope>X-RAY CRYSTALLOGRAPHY (4.50 ANGSTROMS) IN PHOTOSYSTEM II</scope>
    <scope>COFACTOR</scope>
    <scope>SUBUNIT</scope>
    <scope>SUBCELLULAR LOCATION</scope>
    <source>
        <strain>NIES-2133 / IAM M-273 / BP-1</strain>
    </source>
</reference>
<organism>
    <name type="scientific">Thermosynechococcus vestitus (strain NIES-2133 / IAM M-273 / BP-1)</name>
    <dbReference type="NCBI Taxonomy" id="197221"/>
    <lineage>
        <taxon>Bacteria</taxon>
        <taxon>Bacillati</taxon>
        <taxon>Cyanobacteriota</taxon>
        <taxon>Cyanophyceae</taxon>
        <taxon>Acaryochloridales</taxon>
        <taxon>Thermosynechococcaceae</taxon>
        <taxon>Thermosynechococcus</taxon>
    </lineage>
</organism>
<protein>
    <recommendedName>
        <fullName evidence="1">Photosystem II reaction center protein J</fullName>
        <shortName evidence="1">PSII-J</shortName>
    </recommendedName>
</protein>
<proteinExistence type="evidence at protein level"/>
<feature type="initiator methionine" description="Removed" evidence="4 5">
    <location>
        <position position="1"/>
    </location>
</feature>
<feature type="chain" id="PRO_0000216623" description="Photosystem II reaction center protein J">
    <location>
        <begin position="2"/>
        <end position="40"/>
    </location>
</feature>
<feature type="topological domain" description="Cytoplasmic" evidence="4">
    <location>
        <begin position="2"/>
        <end position="11"/>
    </location>
</feature>
<feature type="transmembrane region" description="Helical" evidence="4">
    <location>
        <begin position="12"/>
        <end position="26"/>
    </location>
</feature>
<feature type="topological domain" description="Lumenal" evidence="4">
    <location>
        <begin position="27"/>
        <end position="40"/>
    </location>
</feature>
<feature type="modified residue" description="N-acetylmethionine" evidence="4 5">
    <location>
        <position position="2"/>
    </location>
</feature>
<feature type="strand" evidence="14">
    <location>
        <begin position="5"/>
        <end position="8"/>
    </location>
</feature>
<feature type="helix" evidence="15">
    <location>
        <begin position="10"/>
        <end position="31"/>
    </location>
</feature>
<feature type="strand" evidence="15">
    <location>
        <begin position="33"/>
        <end position="35"/>
    </location>
</feature>